<comment type="function">
    <text evidence="1">Involved in anaerobic NO protection.</text>
</comment>
<comment type="similarity">
    <text evidence="2">Belongs to the LysR transcriptional regulatory family.</text>
</comment>
<organism>
    <name type="scientific">Salmonella agona (strain SL483)</name>
    <dbReference type="NCBI Taxonomy" id="454166"/>
    <lineage>
        <taxon>Bacteria</taxon>
        <taxon>Pseudomonadati</taxon>
        <taxon>Pseudomonadota</taxon>
        <taxon>Gammaproteobacteria</taxon>
        <taxon>Enterobacterales</taxon>
        <taxon>Enterobacteriaceae</taxon>
        <taxon>Salmonella</taxon>
    </lineage>
</organism>
<gene>
    <name evidence="1" type="primary">yidZ</name>
    <name type="ordered locus">SeAg_B4072</name>
</gene>
<dbReference type="EMBL" id="CP001138">
    <property type="protein sequence ID" value="ACH49122.1"/>
    <property type="molecule type" value="Genomic_DNA"/>
</dbReference>
<dbReference type="RefSeq" id="WP_000749365.1">
    <property type="nucleotide sequence ID" value="NC_011149.1"/>
</dbReference>
<dbReference type="SMR" id="B5EYX8"/>
<dbReference type="KEGG" id="sea:SeAg_B4072"/>
<dbReference type="HOGENOM" id="CLU_039613_39_2_6"/>
<dbReference type="Proteomes" id="UP000008819">
    <property type="component" value="Chromosome"/>
</dbReference>
<dbReference type="GO" id="GO:0003677">
    <property type="term" value="F:DNA binding"/>
    <property type="evidence" value="ECO:0007669"/>
    <property type="project" value="UniProtKB-KW"/>
</dbReference>
<dbReference type="GO" id="GO:0003700">
    <property type="term" value="F:DNA-binding transcription factor activity"/>
    <property type="evidence" value="ECO:0007669"/>
    <property type="project" value="UniProtKB-UniRule"/>
</dbReference>
<dbReference type="CDD" id="cd08417">
    <property type="entry name" value="PBP2_Nitroaromatics_like"/>
    <property type="match status" value="1"/>
</dbReference>
<dbReference type="Gene3D" id="3.40.190.10">
    <property type="entry name" value="Periplasmic binding protein-like II"/>
    <property type="match status" value="2"/>
</dbReference>
<dbReference type="Gene3D" id="1.10.10.10">
    <property type="entry name" value="Winged helix-like DNA-binding domain superfamily/Winged helix DNA-binding domain"/>
    <property type="match status" value="1"/>
</dbReference>
<dbReference type="HAMAP" id="MF_01607">
    <property type="entry name" value="HTH_type_YidZ"/>
    <property type="match status" value="1"/>
</dbReference>
<dbReference type="InterPro" id="IPR050389">
    <property type="entry name" value="LysR-type_TF"/>
</dbReference>
<dbReference type="InterPro" id="IPR005119">
    <property type="entry name" value="LysR_subst-bd"/>
</dbReference>
<dbReference type="InterPro" id="IPR000847">
    <property type="entry name" value="Tscrpt_reg_HTH_LysR"/>
</dbReference>
<dbReference type="InterPro" id="IPR023746">
    <property type="entry name" value="Tscrpt_reg_YidZ"/>
</dbReference>
<dbReference type="InterPro" id="IPR036388">
    <property type="entry name" value="WH-like_DNA-bd_sf"/>
</dbReference>
<dbReference type="InterPro" id="IPR036390">
    <property type="entry name" value="WH_DNA-bd_sf"/>
</dbReference>
<dbReference type="InterPro" id="IPR037402">
    <property type="entry name" value="YidZ_PBP2"/>
</dbReference>
<dbReference type="NCBIfam" id="NF007581">
    <property type="entry name" value="PRK10216.1"/>
    <property type="match status" value="1"/>
</dbReference>
<dbReference type="PANTHER" id="PTHR30118">
    <property type="entry name" value="HTH-TYPE TRANSCRIPTIONAL REGULATOR LEUO-RELATED"/>
    <property type="match status" value="1"/>
</dbReference>
<dbReference type="PANTHER" id="PTHR30118:SF11">
    <property type="entry name" value="HTH-TYPE TRANSCRIPTIONAL REGULATOR YIDZ"/>
    <property type="match status" value="1"/>
</dbReference>
<dbReference type="Pfam" id="PF00126">
    <property type="entry name" value="HTH_1"/>
    <property type="match status" value="1"/>
</dbReference>
<dbReference type="Pfam" id="PF03466">
    <property type="entry name" value="LysR_substrate"/>
    <property type="match status" value="1"/>
</dbReference>
<dbReference type="SUPFAM" id="SSF53850">
    <property type="entry name" value="Periplasmic binding protein-like II"/>
    <property type="match status" value="1"/>
</dbReference>
<dbReference type="SUPFAM" id="SSF46785">
    <property type="entry name" value="Winged helix' DNA-binding domain"/>
    <property type="match status" value="1"/>
</dbReference>
<dbReference type="PROSITE" id="PS50931">
    <property type="entry name" value="HTH_LYSR"/>
    <property type="match status" value="1"/>
</dbReference>
<sequence>MKKSLTNLDLNLLLCLQLLMQERSVTKAAKRMNVTPSAVSKSLAKLRAWFDDPLFVNTPLGLAPTPLMVSMEQSLADWMQMGNQLLDKPHHQTPRGLKFELAAESPLMMIMFNSLSQQIYQRYPQATIKVRNWDYDSLEAITRGEVDIGFTGRESHPRSRELLSLLPLAIDFEVLFSDLPWVWLREDHPALREAWDLDTFLRYPHISICWEQSDTWALDDVLQEMGRKRHIALSLPGFEQSLFMAAQPDHTLIATAPRYCQHYNQLHQLPLVARPLPFDAQQREKLMVPFTLLWHKRNSHNPKIVWLRQAINTLCRRLI</sequence>
<name>YIDZ_SALA4</name>
<keyword id="KW-0238">DNA-binding</keyword>
<keyword id="KW-0804">Transcription</keyword>
<keyword id="KW-0805">Transcription regulation</keyword>
<reference key="1">
    <citation type="journal article" date="2011" name="J. Bacteriol.">
        <title>Comparative genomics of 28 Salmonella enterica isolates: evidence for CRISPR-mediated adaptive sublineage evolution.</title>
        <authorList>
            <person name="Fricke W.F."/>
            <person name="Mammel M.K."/>
            <person name="McDermott P.F."/>
            <person name="Tartera C."/>
            <person name="White D.G."/>
            <person name="Leclerc J.E."/>
            <person name="Ravel J."/>
            <person name="Cebula T.A."/>
        </authorList>
    </citation>
    <scope>NUCLEOTIDE SEQUENCE [LARGE SCALE GENOMIC DNA]</scope>
    <source>
        <strain>SL483</strain>
    </source>
</reference>
<protein>
    <recommendedName>
        <fullName evidence="1">HTH-type transcriptional regulator YidZ</fullName>
    </recommendedName>
</protein>
<evidence type="ECO:0000255" key="1">
    <source>
        <dbReference type="HAMAP-Rule" id="MF_01607"/>
    </source>
</evidence>
<evidence type="ECO:0000305" key="2"/>
<accession>B5EYX8</accession>
<feature type="chain" id="PRO_1000148198" description="HTH-type transcriptional regulator YidZ">
    <location>
        <begin position="1"/>
        <end position="319"/>
    </location>
</feature>
<feature type="domain" description="HTH lysR-type" evidence="1">
    <location>
        <begin position="8"/>
        <end position="65"/>
    </location>
</feature>
<feature type="DNA-binding region" description="H-T-H motif" evidence="1">
    <location>
        <begin position="25"/>
        <end position="44"/>
    </location>
</feature>
<proteinExistence type="inferred from homology"/>